<organism>
    <name type="scientific">Mus musculus</name>
    <name type="common">Mouse</name>
    <dbReference type="NCBI Taxonomy" id="10090"/>
    <lineage>
        <taxon>Eukaryota</taxon>
        <taxon>Metazoa</taxon>
        <taxon>Chordata</taxon>
        <taxon>Craniata</taxon>
        <taxon>Vertebrata</taxon>
        <taxon>Euteleostomi</taxon>
        <taxon>Mammalia</taxon>
        <taxon>Eutheria</taxon>
        <taxon>Euarchontoglires</taxon>
        <taxon>Glires</taxon>
        <taxon>Rodentia</taxon>
        <taxon>Myomorpha</taxon>
        <taxon>Muroidea</taxon>
        <taxon>Muridae</taxon>
        <taxon>Murinae</taxon>
        <taxon>Mus</taxon>
        <taxon>Mus</taxon>
    </lineage>
</organism>
<keyword id="KW-0010">Activator</keyword>
<keyword id="KW-0025">Alternative splicing</keyword>
<keyword id="KW-0221">Differentiation</keyword>
<keyword id="KW-0238">DNA-binding</keyword>
<keyword id="KW-0539">Nucleus</keyword>
<keyword id="KW-1185">Reference proteome</keyword>
<keyword id="KW-0804">Transcription</keyword>
<keyword id="KW-0805">Transcription regulation</keyword>
<dbReference type="EMBL" id="AK150133">
    <property type="protein sequence ID" value="BAE29330.1"/>
    <property type="molecule type" value="mRNA"/>
</dbReference>
<dbReference type="EMBL" id="AK171828">
    <property type="protein sequence ID" value="BAE42686.1"/>
    <property type="molecule type" value="mRNA"/>
</dbReference>
<dbReference type="EMBL" id="BC024521">
    <property type="protein sequence ID" value="AAH24521.1"/>
    <property type="molecule type" value="mRNA"/>
</dbReference>
<dbReference type="CCDS" id="CCDS29497.1">
    <molecule id="Q8R1H8-1"/>
</dbReference>
<dbReference type="CCDS" id="CCDS89321.1">
    <molecule id="Q8R1H8-2"/>
</dbReference>
<dbReference type="RefSeq" id="NP_001343533.1">
    <molecule id="Q8R1H8-2"/>
    <property type="nucleotide sequence ID" value="NM_001356604.1"/>
</dbReference>
<dbReference type="RefSeq" id="NP_083243.1">
    <molecule id="Q8R1H8-1"/>
    <property type="nucleotide sequence ID" value="NM_028967.2"/>
</dbReference>
<dbReference type="RefSeq" id="XP_006531914.1">
    <property type="nucleotide sequence ID" value="XM_006531851.2"/>
</dbReference>
<dbReference type="SMR" id="Q8R1H8"/>
<dbReference type="FunCoup" id="Q8R1H8">
    <property type="interactions" value="572"/>
</dbReference>
<dbReference type="STRING" id="10090.ENSMUSP00000045744"/>
<dbReference type="iPTMnet" id="Q8R1H8"/>
<dbReference type="PhosphoSitePlus" id="Q8R1H8"/>
<dbReference type="PaxDb" id="10090-ENSMUSP00000045744"/>
<dbReference type="ProteomicsDB" id="273650">
    <molecule id="Q8R1H8-1"/>
</dbReference>
<dbReference type="ProteomicsDB" id="273651">
    <molecule id="Q8R1H8-2"/>
</dbReference>
<dbReference type="Antibodypedia" id="29580">
    <property type="antibodies" value="194 antibodies from 28 providers"/>
</dbReference>
<dbReference type="DNASU" id="74481"/>
<dbReference type="Ensembl" id="ENSMUST00000045042.8">
    <molecule id="Q8R1H8-1"/>
    <property type="protein sequence ID" value="ENSMUSP00000045744.8"/>
    <property type="gene ID" value="ENSMUSG00000039699.15"/>
</dbReference>
<dbReference type="Ensembl" id="ENSMUST00000237511.2">
    <molecule id="Q8R1H8-2"/>
    <property type="protein sequence ID" value="ENSMUSP00000158113.2"/>
    <property type="gene ID" value="ENSMUSG00000039699.15"/>
</dbReference>
<dbReference type="GeneID" id="74481"/>
<dbReference type="KEGG" id="mmu:74481"/>
<dbReference type="UCSC" id="uc008ghp.1">
    <molecule id="Q8R1H8-2"/>
    <property type="organism name" value="mouse"/>
</dbReference>
<dbReference type="UCSC" id="uc008ghq.1">
    <molecule id="Q8R1H8-1"/>
    <property type="organism name" value="mouse"/>
</dbReference>
<dbReference type="AGR" id="MGI:1921731"/>
<dbReference type="CTD" id="116071"/>
<dbReference type="MGI" id="MGI:1921731">
    <property type="gene designation" value="Batf2"/>
</dbReference>
<dbReference type="VEuPathDB" id="HostDB:ENSMUSG00000039699"/>
<dbReference type="eggNOG" id="KOG1414">
    <property type="taxonomic scope" value="Eukaryota"/>
</dbReference>
<dbReference type="GeneTree" id="ENSGT00940000162373"/>
<dbReference type="HOGENOM" id="CLU_088611_0_0_1"/>
<dbReference type="InParanoid" id="Q8R1H8"/>
<dbReference type="OMA" id="HGCQEQP"/>
<dbReference type="OrthoDB" id="295274at2759"/>
<dbReference type="PhylomeDB" id="Q8R1H8"/>
<dbReference type="TreeFam" id="TF332340"/>
<dbReference type="BioGRID-ORCS" id="74481">
    <property type="hits" value="2 hits in 78 CRISPR screens"/>
</dbReference>
<dbReference type="ChiTaRS" id="Batf2">
    <property type="organism name" value="mouse"/>
</dbReference>
<dbReference type="PRO" id="PR:Q8R1H8"/>
<dbReference type="Proteomes" id="UP000000589">
    <property type="component" value="Chromosome 19"/>
</dbReference>
<dbReference type="RNAct" id="Q8R1H8">
    <property type="molecule type" value="protein"/>
</dbReference>
<dbReference type="Bgee" id="ENSMUSG00000039699">
    <property type="expression patterns" value="Expressed in small intestine Peyer's patch and 47 other cell types or tissues"/>
</dbReference>
<dbReference type="GO" id="GO:0090575">
    <property type="term" value="C:RNA polymerase II transcription regulator complex"/>
    <property type="evidence" value="ECO:0007669"/>
    <property type="project" value="Ensembl"/>
</dbReference>
<dbReference type="GO" id="GO:0003677">
    <property type="term" value="F:DNA binding"/>
    <property type="evidence" value="ECO:0007669"/>
    <property type="project" value="UniProtKB-KW"/>
</dbReference>
<dbReference type="GO" id="GO:0003700">
    <property type="term" value="F:DNA-binding transcription factor activity"/>
    <property type="evidence" value="ECO:0007669"/>
    <property type="project" value="InterPro"/>
</dbReference>
<dbReference type="GO" id="GO:0042832">
    <property type="term" value="P:defense response to protozoan"/>
    <property type="evidence" value="ECO:0000315"/>
    <property type="project" value="UniProtKB"/>
</dbReference>
<dbReference type="GO" id="GO:0043011">
    <property type="term" value="P:myeloid dendritic cell differentiation"/>
    <property type="evidence" value="ECO:0000315"/>
    <property type="project" value="UniProtKB"/>
</dbReference>
<dbReference type="GO" id="GO:0006357">
    <property type="term" value="P:regulation of transcription by RNA polymerase II"/>
    <property type="evidence" value="ECO:0007669"/>
    <property type="project" value="InterPro"/>
</dbReference>
<dbReference type="CDD" id="cd14701">
    <property type="entry name" value="bZIP_BATF"/>
    <property type="match status" value="1"/>
</dbReference>
<dbReference type="FunFam" id="1.20.5.170:FF:000080">
    <property type="entry name" value="Basic leucine zipper transcriptional factor ATF-like 2"/>
    <property type="match status" value="1"/>
</dbReference>
<dbReference type="Gene3D" id="1.20.5.170">
    <property type="match status" value="1"/>
</dbReference>
<dbReference type="InterPro" id="IPR000837">
    <property type="entry name" value="AP-1"/>
</dbReference>
<dbReference type="InterPro" id="IPR004827">
    <property type="entry name" value="bZIP"/>
</dbReference>
<dbReference type="InterPro" id="IPR046347">
    <property type="entry name" value="bZIP_sf"/>
</dbReference>
<dbReference type="PANTHER" id="PTHR23351:SF11">
    <property type="entry name" value="BASIC LEUCINE ZIPPER TRANSCRIPTIONAL FACTOR ATF-LIKE 2"/>
    <property type="match status" value="1"/>
</dbReference>
<dbReference type="PANTHER" id="PTHR23351">
    <property type="entry name" value="FOS TRANSCRIPTION FACTOR-RELATED"/>
    <property type="match status" value="1"/>
</dbReference>
<dbReference type="Pfam" id="PF00170">
    <property type="entry name" value="bZIP_1"/>
    <property type="match status" value="1"/>
</dbReference>
<dbReference type="SMART" id="SM00338">
    <property type="entry name" value="BRLZ"/>
    <property type="match status" value="1"/>
</dbReference>
<dbReference type="SUPFAM" id="SSF57959">
    <property type="entry name" value="Leucine zipper domain"/>
    <property type="match status" value="1"/>
</dbReference>
<dbReference type="PROSITE" id="PS50217">
    <property type="entry name" value="BZIP"/>
    <property type="match status" value="1"/>
</dbReference>
<dbReference type="PROSITE" id="PS00036">
    <property type="entry name" value="BZIP_BASIC"/>
    <property type="match status" value="1"/>
</dbReference>
<comment type="function">
    <text evidence="1 4">AP-1 family transcription factor that controls the differentiation of lineage-specific cells in the immune system. Selectively suppresses CCN1 transcription and hence blocks the downstream cell proliferation signals produced by CCN1 and inhibits CCN1-induced anchorage-independent growth and invasion in several cancer types. Possibly acts by interfering with AP-1 binding to CCN1 promoter (By similarity). Following infection, participates in the differentiation of CD8(+) thymic conventional dendritic cells in the immune system. Acts via the formation of a heterodimer with JUN family proteins that recognizes and binds DNA sequence 5'-TGA[CG]TCA-3' and regulates expression of target genes.</text>
</comment>
<comment type="subunit">
    <text evidence="1">Heterodimer; heterodimerizes with JUN family proteins.</text>
</comment>
<comment type="subcellular location">
    <subcellularLocation>
        <location evidence="2">Nucleus</location>
    </subcellularLocation>
</comment>
<comment type="alternative products">
    <event type="alternative splicing"/>
    <isoform>
        <id>Q8R1H8-1</id>
        <name>1</name>
        <sequence type="displayed"/>
    </isoform>
    <isoform>
        <id>Q8R1H8-2</id>
        <name>2</name>
        <sequence type="described" ref="VSP_025753"/>
    </isoform>
</comment>
<comment type="induction">
    <text evidence="4">By cytokines in response to infection. By IFN-gamma.</text>
</comment>
<comment type="disruption phenotype">
    <text evidence="4">Mice display normal development of natural killer (NK), T- and B-cells, plasmacytoid dendritic cells (pDCs), neutrophils, resting CD8-alpha(+) classical dendritic cells (cDCs), and peritoneal, liver and lung macrophages. However, they show significantly decreased survival after infection by T.gondii. Notably, mice show significantly decreased numbers of lung-resident CD103(+)CD11b(-) dendritic cells and CD103(+)CD11b(-) macrophages after infection.</text>
</comment>
<comment type="similarity">
    <text evidence="6">Belongs to the bZIP family.</text>
</comment>
<reference key="1">
    <citation type="journal article" date="2005" name="Science">
        <title>The transcriptional landscape of the mammalian genome.</title>
        <authorList>
            <person name="Carninci P."/>
            <person name="Kasukawa T."/>
            <person name="Katayama S."/>
            <person name="Gough J."/>
            <person name="Frith M.C."/>
            <person name="Maeda N."/>
            <person name="Oyama R."/>
            <person name="Ravasi T."/>
            <person name="Lenhard B."/>
            <person name="Wells C."/>
            <person name="Kodzius R."/>
            <person name="Shimokawa K."/>
            <person name="Bajic V.B."/>
            <person name="Brenner S.E."/>
            <person name="Batalov S."/>
            <person name="Forrest A.R."/>
            <person name="Zavolan M."/>
            <person name="Davis M.J."/>
            <person name="Wilming L.G."/>
            <person name="Aidinis V."/>
            <person name="Allen J.E."/>
            <person name="Ambesi-Impiombato A."/>
            <person name="Apweiler R."/>
            <person name="Aturaliya R.N."/>
            <person name="Bailey T.L."/>
            <person name="Bansal M."/>
            <person name="Baxter L."/>
            <person name="Beisel K.W."/>
            <person name="Bersano T."/>
            <person name="Bono H."/>
            <person name="Chalk A.M."/>
            <person name="Chiu K.P."/>
            <person name="Choudhary V."/>
            <person name="Christoffels A."/>
            <person name="Clutterbuck D.R."/>
            <person name="Crowe M.L."/>
            <person name="Dalla E."/>
            <person name="Dalrymple B.P."/>
            <person name="de Bono B."/>
            <person name="Della Gatta G."/>
            <person name="di Bernardo D."/>
            <person name="Down T."/>
            <person name="Engstrom P."/>
            <person name="Fagiolini M."/>
            <person name="Faulkner G."/>
            <person name="Fletcher C.F."/>
            <person name="Fukushima T."/>
            <person name="Furuno M."/>
            <person name="Futaki S."/>
            <person name="Gariboldi M."/>
            <person name="Georgii-Hemming P."/>
            <person name="Gingeras T.R."/>
            <person name="Gojobori T."/>
            <person name="Green R.E."/>
            <person name="Gustincich S."/>
            <person name="Harbers M."/>
            <person name="Hayashi Y."/>
            <person name="Hensch T.K."/>
            <person name="Hirokawa N."/>
            <person name="Hill D."/>
            <person name="Huminiecki L."/>
            <person name="Iacono M."/>
            <person name="Ikeo K."/>
            <person name="Iwama A."/>
            <person name="Ishikawa T."/>
            <person name="Jakt M."/>
            <person name="Kanapin A."/>
            <person name="Katoh M."/>
            <person name="Kawasawa Y."/>
            <person name="Kelso J."/>
            <person name="Kitamura H."/>
            <person name="Kitano H."/>
            <person name="Kollias G."/>
            <person name="Krishnan S.P."/>
            <person name="Kruger A."/>
            <person name="Kummerfeld S.K."/>
            <person name="Kurochkin I.V."/>
            <person name="Lareau L.F."/>
            <person name="Lazarevic D."/>
            <person name="Lipovich L."/>
            <person name="Liu J."/>
            <person name="Liuni S."/>
            <person name="McWilliam S."/>
            <person name="Madan Babu M."/>
            <person name="Madera M."/>
            <person name="Marchionni L."/>
            <person name="Matsuda H."/>
            <person name="Matsuzawa S."/>
            <person name="Miki H."/>
            <person name="Mignone F."/>
            <person name="Miyake S."/>
            <person name="Morris K."/>
            <person name="Mottagui-Tabar S."/>
            <person name="Mulder N."/>
            <person name="Nakano N."/>
            <person name="Nakauchi H."/>
            <person name="Ng P."/>
            <person name="Nilsson R."/>
            <person name="Nishiguchi S."/>
            <person name="Nishikawa S."/>
            <person name="Nori F."/>
            <person name="Ohara O."/>
            <person name="Okazaki Y."/>
            <person name="Orlando V."/>
            <person name="Pang K.C."/>
            <person name="Pavan W.J."/>
            <person name="Pavesi G."/>
            <person name="Pesole G."/>
            <person name="Petrovsky N."/>
            <person name="Piazza S."/>
            <person name="Reed J."/>
            <person name="Reid J.F."/>
            <person name="Ring B.Z."/>
            <person name="Ringwald M."/>
            <person name="Rost B."/>
            <person name="Ruan Y."/>
            <person name="Salzberg S.L."/>
            <person name="Sandelin A."/>
            <person name="Schneider C."/>
            <person name="Schoenbach C."/>
            <person name="Sekiguchi K."/>
            <person name="Semple C.A."/>
            <person name="Seno S."/>
            <person name="Sessa L."/>
            <person name="Sheng Y."/>
            <person name="Shibata Y."/>
            <person name="Shimada H."/>
            <person name="Shimada K."/>
            <person name="Silva D."/>
            <person name="Sinclair B."/>
            <person name="Sperling S."/>
            <person name="Stupka E."/>
            <person name="Sugiura K."/>
            <person name="Sultana R."/>
            <person name="Takenaka Y."/>
            <person name="Taki K."/>
            <person name="Tammoja K."/>
            <person name="Tan S.L."/>
            <person name="Tang S."/>
            <person name="Taylor M.S."/>
            <person name="Tegner J."/>
            <person name="Teichmann S.A."/>
            <person name="Ueda H.R."/>
            <person name="van Nimwegen E."/>
            <person name="Verardo R."/>
            <person name="Wei C.L."/>
            <person name="Yagi K."/>
            <person name="Yamanishi H."/>
            <person name="Zabarovsky E."/>
            <person name="Zhu S."/>
            <person name="Zimmer A."/>
            <person name="Hide W."/>
            <person name="Bult C."/>
            <person name="Grimmond S.M."/>
            <person name="Teasdale R.D."/>
            <person name="Liu E.T."/>
            <person name="Brusic V."/>
            <person name="Quackenbush J."/>
            <person name="Wahlestedt C."/>
            <person name="Mattick J.S."/>
            <person name="Hume D.A."/>
            <person name="Kai C."/>
            <person name="Sasaki D."/>
            <person name="Tomaru Y."/>
            <person name="Fukuda S."/>
            <person name="Kanamori-Katayama M."/>
            <person name="Suzuki M."/>
            <person name="Aoki J."/>
            <person name="Arakawa T."/>
            <person name="Iida J."/>
            <person name="Imamura K."/>
            <person name="Itoh M."/>
            <person name="Kato T."/>
            <person name="Kawaji H."/>
            <person name="Kawagashira N."/>
            <person name="Kawashima T."/>
            <person name="Kojima M."/>
            <person name="Kondo S."/>
            <person name="Konno H."/>
            <person name="Nakano K."/>
            <person name="Ninomiya N."/>
            <person name="Nishio T."/>
            <person name="Okada M."/>
            <person name="Plessy C."/>
            <person name="Shibata K."/>
            <person name="Shiraki T."/>
            <person name="Suzuki S."/>
            <person name="Tagami M."/>
            <person name="Waki K."/>
            <person name="Watahiki A."/>
            <person name="Okamura-Oho Y."/>
            <person name="Suzuki H."/>
            <person name="Kawai J."/>
            <person name="Hayashizaki Y."/>
        </authorList>
    </citation>
    <scope>NUCLEOTIDE SEQUENCE [LARGE SCALE MRNA] (ISOFORMS 1 AND 2)</scope>
    <source>
        <strain>C57BL/6J</strain>
        <strain>NOD</strain>
        <tissue>Bone marrow</tissue>
    </source>
</reference>
<reference key="2">
    <citation type="journal article" date="2004" name="Genome Res.">
        <title>The status, quality, and expansion of the NIH full-length cDNA project: the Mammalian Gene Collection (MGC).</title>
        <authorList>
            <consortium name="The MGC Project Team"/>
        </authorList>
    </citation>
    <scope>NUCLEOTIDE SEQUENCE [LARGE SCALE MRNA] (ISOFORM 1)</scope>
    <source>
        <strain>FVB/N</strain>
        <tissue>Colon</tissue>
    </source>
</reference>
<reference key="3">
    <citation type="journal article" date="2012" name="Nature">
        <title>Compensatory dendritic cell development mediated by BATF-IRF interactions.</title>
        <authorList>
            <person name="Tussiwand R."/>
            <person name="Lee W.L."/>
            <person name="Murphy T.L."/>
            <person name="Mashayekhi M."/>
            <person name="Kc W."/>
            <person name="Albring J.C."/>
            <person name="Satpathy A.T."/>
            <person name="Rotondo J.A."/>
            <person name="Edelson B.T."/>
            <person name="Kretzer N.M."/>
            <person name="Wu X."/>
            <person name="Weiss L.A."/>
            <person name="Glasmacher E."/>
            <person name="Li P."/>
            <person name="Liao W."/>
            <person name="Behnke M."/>
            <person name="Lam S.S."/>
            <person name="Aurthur C.T."/>
            <person name="Leonard W.J."/>
            <person name="Singh H."/>
            <person name="Stallings C.L."/>
            <person name="Sibley L.D."/>
            <person name="Schreiber R.D."/>
            <person name="Murphy K.M."/>
        </authorList>
    </citation>
    <scope>FUNCTION</scope>
    <scope>DISRUPTION PHENOTYPE</scope>
    <scope>INDUCTION</scope>
</reference>
<accession>Q8R1H8</accession>
<accession>Q3TAI2</accession>
<gene>
    <name type="primary">Batf2</name>
</gene>
<feature type="chain" id="PRO_0000288682" description="Basic leucine zipper transcriptional factor ATF-like 2">
    <location>
        <begin position="1"/>
        <end position="277"/>
    </location>
</feature>
<feature type="domain" description="bZIP" evidence="2">
    <location>
        <begin position="18"/>
        <end position="81"/>
    </location>
</feature>
<feature type="region of interest" description="Disordered" evidence="3">
    <location>
        <begin position="15"/>
        <end position="50"/>
    </location>
</feature>
<feature type="region of interest" description="Basic motif" evidence="2">
    <location>
        <begin position="20"/>
        <end position="42"/>
    </location>
</feature>
<feature type="region of interest" description="Leucine-zipper" evidence="2">
    <location>
        <begin position="46"/>
        <end position="67"/>
    </location>
</feature>
<feature type="region of interest" description="Disordered" evidence="3">
    <location>
        <begin position="126"/>
        <end position="146"/>
    </location>
</feature>
<feature type="region of interest" description="Disordered" evidence="3">
    <location>
        <begin position="191"/>
        <end position="256"/>
    </location>
</feature>
<feature type="compositionally biased region" description="Basic and acidic residues" evidence="3">
    <location>
        <begin position="41"/>
        <end position="50"/>
    </location>
</feature>
<feature type="compositionally biased region" description="Polar residues" evidence="3">
    <location>
        <begin position="213"/>
        <end position="227"/>
    </location>
</feature>
<feature type="compositionally biased region" description="Polar residues" evidence="3">
    <location>
        <begin position="247"/>
        <end position="256"/>
    </location>
</feature>
<feature type="splice variant" id="VSP_025753" description="In isoform 2." evidence="5">
    <location>
        <position position="48"/>
    </location>
</feature>
<sequence length="277" mass="29703">MQLCGSSELLTETDLGESQKQLKKKQKNRVAAQRSRQKHTSKADALHQQHESLEKQNHALRKEIQALQTELAGWGRTLHLHERLCRVDCDPCPVLLPSGCPIQAKQPSGQPAPLGYNGCQEQLGLFQTPGSSPRAQHLSPGPCSHESPGLLPSLLPSLAFDPLMVRTPLAQLSPSPVLSASSPSGSSLLGSFSKLDPLIPSPQDQLAPPQPLRQEQPTSGRLASSDSPAALGPECSQNREHLPALPGSSTHWQKSSVAPSPQALMAFPLLSSAKVHF</sequence>
<evidence type="ECO:0000250" key="1"/>
<evidence type="ECO:0000255" key="2">
    <source>
        <dbReference type="PROSITE-ProRule" id="PRU00978"/>
    </source>
</evidence>
<evidence type="ECO:0000256" key="3">
    <source>
        <dbReference type="SAM" id="MobiDB-lite"/>
    </source>
</evidence>
<evidence type="ECO:0000269" key="4">
    <source>
    </source>
</evidence>
<evidence type="ECO:0000303" key="5">
    <source>
    </source>
</evidence>
<evidence type="ECO:0000305" key="6"/>
<proteinExistence type="evidence at transcript level"/>
<protein>
    <recommendedName>
        <fullName>Basic leucine zipper transcriptional factor ATF-like 2</fullName>
        <shortName>B-ATF-2</shortName>
    </recommendedName>
</protein>
<name>BATF2_MOUSE</name>